<proteinExistence type="inferred from homology"/>
<organism>
    <name type="scientific">Erwinia tasmaniensis (strain DSM 17950 / CFBP 7177 / CIP 109463 / NCPPB 4357 / Et1/99)</name>
    <dbReference type="NCBI Taxonomy" id="465817"/>
    <lineage>
        <taxon>Bacteria</taxon>
        <taxon>Pseudomonadati</taxon>
        <taxon>Pseudomonadota</taxon>
        <taxon>Gammaproteobacteria</taxon>
        <taxon>Enterobacterales</taxon>
        <taxon>Erwiniaceae</taxon>
        <taxon>Erwinia</taxon>
    </lineage>
</organism>
<name>RL7_ERWT9</name>
<protein>
    <recommendedName>
        <fullName evidence="1">Large ribosomal subunit protein bL12</fullName>
    </recommendedName>
    <alternativeName>
        <fullName evidence="2">50S ribosomal protein L7/L12</fullName>
    </alternativeName>
</protein>
<feature type="chain" id="PRO_1000121438" description="Large ribosomal subunit protein bL12">
    <location>
        <begin position="1"/>
        <end position="121"/>
    </location>
</feature>
<gene>
    <name evidence="1" type="primary">rplL</name>
    <name type="ordered locus">ETA_01540</name>
</gene>
<keyword id="KW-1185">Reference proteome</keyword>
<keyword id="KW-0687">Ribonucleoprotein</keyword>
<keyword id="KW-0689">Ribosomal protein</keyword>
<accession>B2VG95</accession>
<dbReference type="EMBL" id="CU468135">
    <property type="protein sequence ID" value="CAO95200.1"/>
    <property type="molecule type" value="Genomic_DNA"/>
</dbReference>
<dbReference type="RefSeq" id="WP_004154989.1">
    <property type="nucleotide sequence ID" value="NC_010694.1"/>
</dbReference>
<dbReference type="SMR" id="B2VG95"/>
<dbReference type="STRING" id="465817.ETA_01540"/>
<dbReference type="GeneID" id="97607500"/>
<dbReference type="KEGG" id="eta:ETA_01540"/>
<dbReference type="eggNOG" id="COG0222">
    <property type="taxonomic scope" value="Bacteria"/>
</dbReference>
<dbReference type="HOGENOM" id="CLU_086499_3_2_6"/>
<dbReference type="OrthoDB" id="9811748at2"/>
<dbReference type="Proteomes" id="UP000001726">
    <property type="component" value="Chromosome"/>
</dbReference>
<dbReference type="GO" id="GO:0022625">
    <property type="term" value="C:cytosolic large ribosomal subunit"/>
    <property type="evidence" value="ECO:0007669"/>
    <property type="project" value="TreeGrafter"/>
</dbReference>
<dbReference type="GO" id="GO:0003729">
    <property type="term" value="F:mRNA binding"/>
    <property type="evidence" value="ECO:0007669"/>
    <property type="project" value="TreeGrafter"/>
</dbReference>
<dbReference type="GO" id="GO:0003735">
    <property type="term" value="F:structural constituent of ribosome"/>
    <property type="evidence" value="ECO:0007669"/>
    <property type="project" value="InterPro"/>
</dbReference>
<dbReference type="GO" id="GO:0006412">
    <property type="term" value="P:translation"/>
    <property type="evidence" value="ECO:0007669"/>
    <property type="project" value="UniProtKB-UniRule"/>
</dbReference>
<dbReference type="CDD" id="cd00387">
    <property type="entry name" value="Ribosomal_L7_L12"/>
    <property type="match status" value="1"/>
</dbReference>
<dbReference type="FunFam" id="1.20.5.710:FF:000001">
    <property type="entry name" value="50S ribosomal protein L7/L12"/>
    <property type="match status" value="1"/>
</dbReference>
<dbReference type="FunFam" id="3.30.1390.10:FF:000001">
    <property type="entry name" value="50S ribosomal protein L7/L12"/>
    <property type="match status" value="1"/>
</dbReference>
<dbReference type="Gene3D" id="3.30.1390.10">
    <property type="match status" value="1"/>
</dbReference>
<dbReference type="Gene3D" id="1.20.5.710">
    <property type="entry name" value="Single helix bin"/>
    <property type="match status" value="1"/>
</dbReference>
<dbReference type="HAMAP" id="MF_00368">
    <property type="entry name" value="Ribosomal_bL12"/>
    <property type="match status" value="1"/>
</dbReference>
<dbReference type="InterPro" id="IPR000206">
    <property type="entry name" value="Ribosomal_bL12"/>
</dbReference>
<dbReference type="InterPro" id="IPR013823">
    <property type="entry name" value="Ribosomal_bL12_C"/>
</dbReference>
<dbReference type="InterPro" id="IPR014719">
    <property type="entry name" value="Ribosomal_bL12_C/ClpS-like"/>
</dbReference>
<dbReference type="InterPro" id="IPR008932">
    <property type="entry name" value="Ribosomal_bL12_oligo"/>
</dbReference>
<dbReference type="InterPro" id="IPR036235">
    <property type="entry name" value="Ribosomal_bL12_oligo_N_sf"/>
</dbReference>
<dbReference type="NCBIfam" id="TIGR00855">
    <property type="entry name" value="L12"/>
    <property type="match status" value="1"/>
</dbReference>
<dbReference type="PANTHER" id="PTHR45987">
    <property type="entry name" value="39S RIBOSOMAL PROTEIN L12"/>
    <property type="match status" value="1"/>
</dbReference>
<dbReference type="PANTHER" id="PTHR45987:SF4">
    <property type="entry name" value="LARGE RIBOSOMAL SUBUNIT PROTEIN BL12M"/>
    <property type="match status" value="1"/>
</dbReference>
<dbReference type="Pfam" id="PF00542">
    <property type="entry name" value="Ribosomal_L12"/>
    <property type="match status" value="1"/>
</dbReference>
<dbReference type="Pfam" id="PF16320">
    <property type="entry name" value="Ribosomal_L12_N"/>
    <property type="match status" value="1"/>
</dbReference>
<dbReference type="SUPFAM" id="SSF54736">
    <property type="entry name" value="ClpS-like"/>
    <property type="match status" value="1"/>
</dbReference>
<dbReference type="SUPFAM" id="SSF48300">
    <property type="entry name" value="Ribosomal protein L7/12, oligomerisation (N-terminal) domain"/>
    <property type="match status" value="1"/>
</dbReference>
<sequence>MSITKDQIIEGVAALSVMEIVELISAMEEKFGVSAAAAVAGPAAAAEAVEEKTEFDVVLKAIGANKVAVIKAVRGATGLGLKEAKDLVESAPAALKEGISKDDAEALKKVLEEAGAEVEVK</sequence>
<comment type="function">
    <text evidence="1">Forms part of the ribosomal stalk which helps the ribosome interact with GTP-bound translation factors. Is thus essential for accurate translation.</text>
</comment>
<comment type="subunit">
    <text evidence="1">Homodimer. Part of the ribosomal stalk of the 50S ribosomal subunit. Forms a multimeric L10(L12)X complex, where L10 forms an elongated spine to which 2 to 4 L12 dimers bind in a sequential fashion. Binds GTP-bound translation factors.</text>
</comment>
<comment type="similarity">
    <text evidence="1">Belongs to the bacterial ribosomal protein bL12 family.</text>
</comment>
<evidence type="ECO:0000255" key="1">
    <source>
        <dbReference type="HAMAP-Rule" id="MF_00368"/>
    </source>
</evidence>
<evidence type="ECO:0000305" key="2"/>
<reference key="1">
    <citation type="journal article" date="2008" name="Environ. Microbiol.">
        <title>The genome of Erwinia tasmaniensis strain Et1/99, a non-pathogenic bacterium in the genus Erwinia.</title>
        <authorList>
            <person name="Kube M."/>
            <person name="Migdoll A.M."/>
            <person name="Mueller I."/>
            <person name="Kuhl H."/>
            <person name="Beck A."/>
            <person name="Reinhardt R."/>
            <person name="Geider K."/>
        </authorList>
    </citation>
    <scope>NUCLEOTIDE SEQUENCE [LARGE SCALE GENOMIC DNA]</scope>
    <source>
        <strain>DSM 17950 / CFBP 7177 / CIP 109463 / NCPPB 4357 / Et1/99</strain>
    </source>
</reference>